<dbReference type="EMBL" id="AAFI02000177">
    <property type="protein sequence ID" value="EAL61738.1"/>
    <property type="molecule type" value="Genomic_DNA"/>
</dbReference>
<dbReference type="RefSeq" id="XP_635266.1">
    <property type="nucleotide sequence ID" value="XM_630174.1"/>
</dbReference>
<dbReference type="SMR" id="Q54EH4"/>
<dbReference type="PaxDb" id="44689-DDB0183943"/>
<dbReference type="EnsemblProtists" id="EAL61738">
    <property type="protein sequence ID" value="EAL61738"/>
    <property type="gene ID" value="DDB_G0291508"/>
</dbReference>
<dbReference type="GeneID" id="8628210"/>
<dbReference type="KEGG" id="ddi:DDB_G0291508"/>
<dbReference type="dictyBase" id="DDB_G0291508"/>
<dbReference type="HOGENOM" id="CLU_3145619_0_0_1"/>
<dbReference type="InParanoid" id="Q54EH4"/>
<dbReference type="PRO" id="PR:Q54EH4"/>
<dbReference type="Proteomes" id="UP000002195">
    <property type="component" value="Chromosome 6"/>
</dbReference>
<dbReference type="GO" id="GO:0005576">
    <property type="term" value="C:extracellular region"/>
    <property type="evidence" value="ECO:0007669"/>
    <property type="project" value="UniProtKB-SubCell"/>
</dbReference>
<accession>Q54EH4</accession>
<sequence length="49" mass="5872">MVFLLFLSFVLSSIFLVPLVYMLNKVFLFNRNRVVNYDSIRKLALTRME</sequence>
<name>Y3943_DICDI</name>
<organism>
    <name type="scientific">Dictyostelium discoideum</name>
    <name type="common">Social amoeba</name>
    <dbReference type="NCBI Taxonomy" id="44689"/>
    <lineage>
        <taxon>Eukaryota</taxon>
        <taxon>Amoebozoa</taxon>
        <taxon>Evosea</taxon>
        <taxon>Eumycetozoa</taxon>
        <taxon>Dictyostelia</taxon>
        <taxon>Dictyosteliales</taxon>
        <taxon>Dictyosteliaceae</taxon>
        <taxon>Dictyostelium</taxon>
    </lineage>
</organism>
<protein>
    <recommendedName>
        <fullName>Putative uncharacterized protein DDB_G0291508</fullName>
    </recommendedName>
</protein>
<evidence type="ECO:0000255" key="1"/>
<evidence type="ECO:0000305" key="2"/>
<reference key="1">
    <citation type="journal article" date="2005" name="Nature">
        <title>The genome of the social amoeba Dictyostelium discoideum.</title>
        <authorList>
            <person name="Eichinger L."/>
            <person name="Pachebat J.A."/>
            <person name="Gloeckner G."/>
            <person name="Rajandream M.A."/>
            <person name="Sucgang R."/>
            <person name="Berriman M."/>
            <person name="Song J."/>
            <person name="Olsen R."/>
            <person name="Szafranski K."/>
            <person name="Xu Q."/>
            <person name="Tunggal B."/>
            <person name="Kummerfeld S."/>
            <person name="Madera M."/>
            <person name="Konfortov B.A."/>
            <person name="Rivero F."/>
            <person name="Bankier A.T."/>
            <person name="Lehmann R."/>
            <person name="Hamlin N."/>
            <person name="Davies R."/>
            <person name="Gaudet P."/>
            <person name="Fey P."/>
            <person name="Pilcher K."/>
            <person name="Chen G."/>
            <person name="Saunders D."/>
            <person name="Sodergren E.J."/>
            <person name="Davis P."/>
            <person name="Kerhornou A."/>
            <person name="Nie X."/>
            <person name="Hall N."/>
            <person name="Anjard C."/>
            <person name="Hemphill L."/>
            <person name="Bason N."/>
            <person name="Farbrother P."/>
            <person name="Desany B."/>
            <person name="Just E."/>
            <person name="Morio T."/>
            <person name="Rost R."/>
            <person name="Churcher C.M."/>
            <person name="Cooper J."/>
            <person name="Haydock S."/>
            <person name="van Driessche N."/>
            <person name="Cronin A."/>
            <person name="Goodhead I."/>
            <person name="Muzny D.M."/>
            <person name="Mourier T."/>
            <person name="Pain A."/>
            <person name="Lu M."/>
            <person name="Harper D."/>
            <person name="Lindsay R."/>
            <person name="Hauser H."/>
            <person name="James K.D."/>
            <person name="Quiles M."/>
            <person name="Madan Babu M."/>
            <person name="Saito T."/>
            <person name="Buchrieser C."/>
            <person name="Wardroper A."/>
            <person name="Felder M."/>
            <person name="Thangavelu M."/>
            <person name="Johnson D."/>
            <person name="Knights A."/>
            <person name="Loulseged H."/>
            <person name="Mungall K.L."/>
            <person name="Oliver K."/>
            <person name="Price C."/>
            <person name="Quail M.A."/>
            <person name="Urushihara H."/>
            <person name="Hernandez J."/>
            <person name="Rabbinowitsch E."/>
            <person name="Steffen D."/>
            <person name="Sanders M."/>
            <person name="Ma J."/>
            <person name="Kohara Y."/>
            <person name="Sharp S."/>
            <person name="Simmonds M.N."/>
            <person name="Spiegler S."/>
            <person name="Tivey A."/>
            <person name="Sugano S."/>
            <person name="White B."/>
            <person name="Walker D."/>
            <person name="Woodward J.R."/>
            <person name="Winckler T."/>
            <person name="Tanaka Y."/>
            <person name="Shaulsky G."/>
            <person name="Schleicher M."/>
            <person name="Weinstock G.M."/>
            <person name="Rosenthal A."/>
            <person name="Cox E.C."/>
            <person name="Chisholm R.L."/>
            <person name="Gibbs R.A."/>
            <person name="Loomis W.F."/>
            <person name="Platzer M."/>
            <person name="Kay R.R."/>
            <person name="Williams J.G."/>
            <person name="Dear P.H."/>
            <person name="Noegel A.A."/>
            <person name="Barrell B.G."/>
            <person name="Kuspa A."/>
        </authorList>
    </citation>
    <scope>NUCLEOTIDE SEQUENCE [LARGE SCALE GENOMIC DNA]</scope>
    <source>
        <strain>AX4</strain>
    </source>
</reference>
<comment type="subcellular location">
    <subcellularLocation>
        <location evidence="2">Secreted</location>
    </subcellularLocation>
</comment>
<gene>
    <name type="ORF">DDB_G0291508</name>
</gene>
<keyword id="KW-1185">Reference proteome</keyword>
<keyword id="KW-0964">Secreted</keyword>
<keyword id="KW-0732">Signal</keyword>
<feature type="signal peptide" evidence="1">
    <location>
        <begin position="1"/>
        <end position="22"/>
    </location>
</feature>
<feature type="chain" id="PRO_0000346881" description="Putative uncharacterized protein DDB_G0291508">
    <location>
        <begin position="23"/>
        <end position="49"/>
    </location>
</feature>
<proteinExistence type="inferred from homology"/>